<dbReference type="EMBL" id="L77117">
    <property type="protein sequence ID" value="AAB98927.1"/>
    <property type="molecule type" value="Genomic_DNA"/>
</dbReference>
<dbReference type="PIR" id="G64414">
    <property type="entry name" value="G64414"/>
</dbReference>
<dbReference type="RefSeq" id="WP_010870433.1">
    <property type="nucleotide sequence ID" value="NC_000909.1"/>
</dbReference>
<dbReference type="SMR" id="Q58329"/>
<dbReference type="FunCoup" id="Q58329">
    <property type="interactions" value="6"/>
</dbReference>
<dbReference type="STRING" id="243232.MJ_0919"/>
<dbReference type="PaxDb" id="243232-MJ_0919"/>
<dbReference type="EnsemblBacteria" id="AAB98927">
    <property type="protein sequence ID" value="AAB98927"/>
    <property type="gene ID" value="MJ_0919"/>
</dbReference>
<dbReference type="GeneID" id="1451808"/>
<dbReference type="KEGG" id="mja:MJ_0919"/>
<dbReference type="eggNOG" id="arCOG02263">
    <property type="taxonomic scope" value="Archaea"/>
</dbReference>
<dbReference type="HOGENOM" id="CLU_157714_0_0_2"/>
<dbReference type="InParanoid" id="Q58329"/>
<dbReference type="OrthoDB" id="59754at2157"/>
<dbReference type="Proteomes" id="UP000000805">
    <property type="component" value="Chromosome"/>
</dbReference>
<dbReference type="Gene3D" id="3.30.110.150">
    <property type="entry name" value="SepF-like protein"/>
    <property type="match status" value="1"/>
</dbReference>
<dbReference type="InterPro" id="IPR007561">
    <property type="entry name" value="Cell_div_SepF/SepF-rel"/>
</dbReference>
<dbReference type="InterPro" id="IPR038594">
    <property type="entry name" value="SepF-like_sf"/>
</dbReference>
<dbReference type="Pfam" id="PF04472">
    <property type="entry name" value="SepF"/>
    <property type="match status" value="1"/>
</dbReference>
<evidence type="ECO:0000256" key="1">
    <source>
        <dbReference type="SAM" id="MobiDB-lite"/>
    </source>
</evidence>
<keyword id="KW-1185">Reference proteome</keyword>
<sequence length="149" mass="16953">MLEKLKKLLSKKGDNFSTPAPVSVDDYLEEIEEIPLTPVEEEKVIIKVCSIEDEKDAVNAIVMAEAGYIVIAKTPNLEKEIDDEFIEIIRKMRNEVAKFGGMLLALGDEHLLITPRNVVIEKLIKEKKEESNVTKENIEIKEEKEENSE</sequence>
<feature type="chain" id="PRO_0000107104" description="Uncharacterized protein MJ0919">
    <location>
        <begin position="1"/>
        <end position="149"/>
    </location>
</feature>
<feature type="region of interest" description="Disordered" evidence="1">
    <location>
        <begin position="130"/>
        <end position="149"/>
    </location>
</feature>
<feature type="compositionally biased region" description="Basic and acidic residues" evidence="1">
    <location>
        <begin position="130"/>
        <end position="144"/>
    </location>
</feature>
<organism>
    <name type="scientific">Methanocaldococcus jannaschii (strain ATCC 43067 / DSM 2661 / JAL-1 / JCM 10045 / NBRC 100440)</name>
    <name type="common">Methanococcus jannaschii</name>
    <dbReference type="NCBI Taxonomy" id="243232"/>
    <lineage>
        <taxon>Archaea</taxon>
        <taxon>Methanobacteriati</taxon>
        <taxon>Methanobacteriota</taxon>
        <taxon>Methanomada group</taxon>
        <taxon>Methanococci</taxon>
        <taxon>Methanococcales</taxon>
        <taxon>Methanocaldococcaceae</taxon>
        <taxon>Methanocaldococcus</taxon>
    </lineage>
</organism>
<accession>Q58329</accession>
<protein>
    <recommendedName>
        <fullName>Uncharacterized protein MJ0919</fullName>
    </recommendedName>
</protein>
<name>Y919_METJA</name>
<reference key="1">
    <citation type="journal article" date="1996" name="Science">
        <title>Complete genome sequence of the methanogenic archaeon, Methanococcus jannaschii.</title>
        <authorList>
            <person name="Bult C.J."/>
            <person name="White O."/>
            <person name="Olsen G.J."/>
            <person name="Zhou L."/>
            <person name="Fleischmann R.D."/>
            <person name="Sutton G.G."/>
            <person name="Blake J.A."/>
            <person name="FitzGerald L.M."/>
            <person name="Clayton R.A."/>
            <person name="Gocayne J.D."/>
            <person name="Kerlavage A.R."/>
            <person name="Dougherty B.A."/>
            <person name="Tomb J.-F."/>
            <person name="Adams M.D."/>
            <person name="Reich C.I."/>
            <person name="Overbeek R."/>
            <person name="Kirkness E.F."/>
            <person name="Weinstock K.G."/>
            <person name="Merrick J.M."/>
            <person name="Glodek A."/>
            <person name="Scott J.L."/>
            <person name="Geoghagen N.S.M."/>
            <person name="Weidman J.F."/>
            <person name="Fuhrmann J.L."/>
            <person name="Nguyen D."/>
            <person name="Utterback T.R."/>
            <person name="Kelley J.M."/>
            <person name="Peterson J.D."/>
            <person name="Sadow P.W."/>
            <person name="Hanna M.C."/>
            <person name="Cotton M.D."/>
            <person name="Roberts K.M."/>
            <person name="Hurst M.A."/>
            <person name="Kaine B.P."/>
            <person name="Borodovsky M."/>
            <person name="Klenk H.-P."/>
            <person name="Fraser C.M."/>
            <person name="Smith H.O."/>
            <person name="Woese C.R."/>
            <person name="Venter J.C."/>
        </authorList>
    </citation>
    <scope>NUCLEOTIDE SEQUENCE [LARGE SCALE GENOMIC DNA]</scope>
    <source>
        <strain>ATCC 43067 / DSM 2661 / JAL-1 / JCM 10045 / NBRC 100440</strain>
    </source>
</reference>
<proteinExistence type="predicted"/>
<gene>
    <name type="ordered locus">MJ0919</name>
</gene>